<sequence length="327" mass="37595">MKFGLFFLNFINSTTVQEQSIVRMQEITEYVDKLNFEQILVYENHFSDNGVVGAPLTVSGFLLGLTEKIKIGSLNHIITTHHPVAIAEEACLLDQLSEGRFILGFSDCEKKDEMHFFNRPVEYQQQLFEECYEIINDALTTGYCNPDNDFYSFPKISVNPHAYTPGGPRKYVTATSHHIVEWAAKKGIPLIFKWDDSNDVRYEYAERYKAVADKYDVDLSEIDHQLMILVNYNEDSNKAKQETRAFISDYVLEMHPNENFENKLEEIIAENAVGNYTECITAAKLAIEKCGAKSVLLSFEPMNDLMSQKNVINIVDDNIKKYHMEYT</sequence>
<comment type="function">
    <text evidence="2">Light-emitting reaction in luminous bacteria. The specific role of the beta subunit is unknown, but it is absolutely required for bioluminescence activity.</text>
</comment>
<comment type="catalytic activity">
    <reaction evidence="2">
        <text>a long-chain fatty aldehyde + FMNH2 + O2 = a long-chain fatty acid + hnu + FMN + H2O + 2 H(+)</text>
        <dbReference type="Rhea" id="RHEA:17181"/>
        <dbReference type="ChEBI" id="CHEBI:15377"/>
        <dbReference type="ChEBI" id="CHEBI:15378"/>
        <dbReference type="ChEBI" id="CHEBI:15379"/>
        <dbReference type="ChEBI" id="CHEBI:17176"/>
        <dbReference type="ChEBI" id="CHEBI:30212"/>
        <dbReference type="ChEBI" id="CHEBI:57560"/>
        <dbReference type="ChEBI" id="CHEBI:57618"/>
        <dbReference type="ChEBI" id="CHEBI:58210"/>
        <dbReference type="EC" id="1.14.14.3"/>
    </reaction>
</comment>
<comment type="subunit">
    <text evidence="1">Heterodimer of an alpha and a beta chain.</text>
</comment>
<comment type="similarity">
    <text evidence="3">Belongs to the bacterial luciferase oxidoreductase family.</text>
</comment>
<organism>
    <name type="scientific">Photorhabdus luminescens</name>
    <name type="common">Xenorhabdus luminescens</name>
    <dbReference type="NCBI Taxonomy" id="29488"/>
    <lineage>
        <taxon>Bacteria</taxon>
        <taxon>Pseudomonadati</taxon>
        <taxon>Pseudomonadota</taxon>
        <taxon>Gammaproteobacteria</taxon>
        <taxon>Enterobacterales</taxon>
        <taxon>Morganellaceae</taxon>
        <taxon>Photorhabdus</taxon>
    </lineage>
</organism>
<name>LUXB1_PHOLU</name>
<evidence type="ECO:0000250" key="1">
    <source>
        <dbReference type="UniProtKB" id="P07740"/>
    </source>
</evidence>
<evidence type="ECO:0000269" key="2">
    <source>
    </source>
</evidence>
<evidence type="ECO:0000305" key="3"/>
<keyword id="KW-0285">Flavoprotein</keyword>
<keyword id="KW-0288">FMN</keyword>
<keyword id="KW-0455">Luminescence</keyword>
<keyword id="KW-0503">Monooxygenase</keyword>
<keyword id="KW-0560">Oxidoreductase</keyword>
<keyword id="KW-0599">Photoprotein</keyword>
<reference key="1">
    <citation type="journal article" date="1990" name="J. Biol. Chem.">
        <title>Nucleotide sequence, expression, and properties of luciferase coded by lux genes from a terrestrial bacterium.</title>
        <authorList>
            <person name="Szittner R."/>
            <person name="Meighen E."/>
        </authorList>
    </citation>
    <scope>NUCLEOTIDE SEQUENCE [GENOMIC DNA]</scope>
    <scope>FUNCTION</scope>
    <scope>CATALYTIC ACTIVITY</scope>
    <source>
        <strain>ATCC 29999 / DSM 3368 / BCRC 14801 / CCM 7077 / CIP 106429 / NCIMB 12670 / Hb</strain>
    </source>
</reference>
<reference key="2">
    <citation type="journal article" date="1992" name="J. Bacteriol.">
        <title>Multiple repetitive elements and organization of the lux operons of luminescent terrestrial bacteria.</title>
        <authorList>
            <person name="Meighen E.A."/>
            <person name="Szittner R.B."/>
        </authorList>
    </citation>
    <scope>NUCLEOTIDE SEQUENCE [GENOMIC DNA]</scope>
    <source>
        <strain>ATCC 29999 / DSM 3368 / BCRC 14801 / CCM 7077 / CIP 106429 / NCIMB 12670 / Hb</strain>
    </source>
</reference>
<reference key="3">
    <citation type="journal article" date="1990" name="Biochem. Biophys. Res. Commun.">
        <title>The nucleotide sequence of the luxA and luxB genes of Xenorhabdus luminescens HM and a comparison of the amino acid sequences of luciferases from four species of bioluminescent bacteria.</title>
        <authorList>
            <person name="Johnston T.C."/>
            <person name="Rucker E.B."/>
            <person name="Cochrum L."/>
            <person name="Hruska K.S."/>
            <person name="Vandegrift V."/>
        </authorList>
    </citation>
    <scope>NUCLEOTIDE SEQUENCE [GENOMIC DNA]</scope>
    <source>
        <strain>Hm</strain>
    </source>
</reference>
<feature type="chain" id="PRO_0000220177" description="Alkanal monooxygenase beta chain">
    <location>
        <begin position="1"/>
        <end position="327"/>
    </location>
</feature>
<feature type="sequence variant" description="In strain: Hm.">
    <original>A</original>
    <variation>R</variation>
    <location>
        <position position="85"/>
    </location>
</feature>
<gene>
    <name type="primary">luxB</name>
</gene>
<proteinExistence type="evidence at protein level"/>
<protein>
    <recommendedName>
        <fullName>Alkanal monooxygenase beta chain</fullName>
        <ecNumber evidence="2">1.14.14.3</ecNumber>
    </recommendedName>
    <alternativeName>
        <fullName>Bacterial luciferase beta chain</fullName>
    </alternativeName>
</protein>
<accession>P19840</accession>
<dbReference type="EC" id="1.14.14.3" evidence="2"/>
<dbReference type="EMBL" id="M57416">
    <property type="protein sequence ID" value="AAA27624.1"/>
    <property type="molecule type" value="Genomic_DNA"/>
</dbReference>
<dbReference type="EMBL" id="M90093">
    <property type="protein sequence ID" value="AAA27620.1"/>
    <property type="molecule type" value="Genomic_DNA"/>
</dbReference>
<dbReference type="EMBL" id="M55977">
    <property type="protein sequence ID" value="AAA27627.1"/>
    <property type="molecule type" value="Genomic_DNA"/>
</dbReference>
<dbReference type="PIR" id="C35411">
    <property type="entry name" value="C35411"/>
</dbReference>
<dbReference type="SMR" id="P19840"/>
<dbReference type="STRING" id="29488.KS18_21625"/>
<dbReference type="KEGG" id="ag:AAA27624"/>
<dbReference type="BRENDA" id="1.14.14.3">
    <property type="organism ID" value="4782"/>
</dbReference>
<dbReference type="GO" id="GO:0005829">
    <property type="term" value="C:cytosol"/>
    <property type="evidence" value="ECO:0007669"/>
    <property type="project" value="TreeGrafter"/>
</dbReference>
<dbReference type="GO" id="GO:0047646">
    <property type="term" value="F:alkanal monooxygenase (FMN-linked) activity"/>
    <property type="evidence" value="ECO:0007669"/>
    <property type="project" value="UniProtKB-EC"/>
</dbReference>
<dbReference type="GO" id="GO:0008218">
    <property type="term" value="P:bioluminescence"/>
    <property type="evidence" value="ECO:0007669"/>
    <property type="project" value="UniProtKB-KW"/>
</dbReference>
<dbReference type="CDD" id="cd01096">
    <property type="entry name" value="Alkanal_monooxygenase"/>
    <property type="match status" value="1"/>
</dbReference>
<dbReference type="Gene3D" id="3.20.20.30">
    <property type="entry name" value="Luciferase-like domain"/>
    <property type="match status" value="2"/>
</dbReference>
<dbReference type="InterPro" id="IPR033924">
    <property type="entry name" value="Alkanal_monooxygenase"/>
</dbReference>
<dbReference type="InterPro" id="IPR050766">
    <property type="entry name" value="Bact_Lucif_Oxidored"/>
</dbReference>
<dbReference type="InterPro" id="IPR018235">
    <property type="entry name" value="Bacterial_luciferase_CS"/>
</dbReference>
<dbReference type="InterPro" id="IPR011251">
    <property type="entry name" value="Luciferase-like_dom"/>
</dbReference>
<dbReference type="InterPro" id="IPR036661">
    <property type="entry name" value="Luciferase-like_sf"/>
</dbReference>
<dbReference type="InterPro" id="IPR002103">
    <property type="entry name" value="Luciferase_bac/NFP"/>
</dbReference>
<dbReference type="PANTHER" id="PTHR30137:SF8">
    <property type="entry name" value="BLR5498 PROTEIN"/>
    <property type="match status" value="1"/>
</dbReference>
<dbReference type="PANTHER" id="PTHR30137">
    <property type="entry name" value="LUCIFERASE-LIKE MONOOXYGENASE"/>
    <property type="match status" value="1"/>
</dbReference>
<dbReference type="Pfam" id="PF00296">
    <property type="entry name" value="Bac_luciferase"/>
    <property type="match status" value="1"/>
</dbReference>
<dbReference type="PRINTS" id="PR00089">
    <property type="entry name" value="LUCIFERASE"/>
</dbReference>
<dbReference type="SUPFAM" id="SSF51679">
    <property type="entry name" value="Bacterial luciferase-like"/>
    <property type="match status" value="1"/>
</dbReference>
<dbReference type="PROSITE" id="PS00494">
    <property type="entry name" value="BACTERIAL_LUCIFERASE"/>
    <property type="match status" value="1"/>
</dbReference>